<organism>
    <name type="scientific">Homo sapiens</name>
    <name type="common">Human</name>
    <dbReference type="NCBI Taxonomy" id="9606"/>
    <lineage>
        <taxon>Eukaryota</taxon>
        <taxon>Metazoa</taxon>
        <taxon>Chordata</taxon>
        <taxon>Craniata</taxon>
        <taxon>Vertebrata</taxon>
        <taxon>Euteleostomi</taxon>
        <taxon>Mammalia</taxon>
        <taxon>Eutheria</taxon>
        <taxon>Euarchontoglires</taxon>
        <taxon>Primates</taxon>
        <taxon>Haplorrhini</taxon>
        <taxon>Catarrhini</taxon>
        <taxon>Hominidae</taxon>
        <taxon>Homo</taxon>
    </lineage>
</organism>
<comment type="function">
    <molecule>Isoform 1</molecule>
    <text>Hypothalamic neuropeptide which binds to the G-protein-coupled galanin receptors (GALR1, GALR2 and GALR3). Involved in a large number of putative physiological functions in CNS homeostatic processes, including the regulation of gonadotropin-releasing hormone secretion.</text>
</comment>
<comment type="function">
    <molecule>Isoform 2</molecule>
    <text evidence="2">Exhibits potent and dose-dependent vasoconstrictor and anti-edema activity in the cutaneous microvasculature, a physiologic effects which does not appear to be mediated via GALR1 or GALR2. Exhibits antimicrobial activity against Gram-negative bacterias, inducing bacterial membrane blebbing (PubMed:23537644).</text>
</comment>
<comment type="interaction">
    <interactant intactId="EBI-12244186">
        <id>Q9UBC7</id>
    </interactant>
    <interactant intactId="EBI-347996">
        <id>O43765</id>
        <label>SGTA</label>
    </interactant>
    <organismsDiffer>false</organismsDiffer>
    <experiments>3</experiments>
</comment>
<comment type="interaction">
    <interactant intactId="EBI-12244186">
        <id>Q9UBC7</id>
    </interactant>
    <interactant intactId="EBI-947187">
        <id>Q9UHD9</id>
        <label>UBQLN2</label>
    </interactant>
    <organismsDiffer>false</organismsDiffer>
    <experiments>6</experiments>
</comment>
<comment type="subcellular location">
    <subcellularLocation>
        <location>Secreted</location>
    </subcellularLocation>
</comment>
<comment type="alternative products">
    <event type="alternative splicing"/>
    <isoform>
        <id>Q9UBC7-1</id>
        <name>1</name>
        <sequence type="displayed"/>
    </isoform>
    <isoform>
        <id>Q9UBC7-2</id>
        <name>2</name>
        <name>Alarin</name>
        <name>del/E3</name>
        <sequence type="described" ref="VSP_030460"/>
    </isoform>
</comment>
<comment type="tissue specificity">
    <text>Isoform 2 is found in ganglia of ganglioneuroma and ganglioneuroblastoma, as well as in differentiated tumor cells of neuroblastoma tissues. Not found in undifferentiated neuroblasts. Isoform 2 is found in the skin, in pericytes covering microvascular arterioles and venules on their abluminal surfaces. In larger vessels, isoform 2 is expressed in layers of smooth muscle cells. Isoform 2 is not detected in endothelial cells.</text>
</comment>
<comment type="miscellaneous">
    <molecule>Isoform 2</molecule>
    <text evidence="4">Cleavage of the signal peptide generates a peptide of 25 amino acids, termed alarin because of the N-terminal alanine and the C-terminal serine. Involved in ganglionic differentiation in neuroblastic tumor tissues. Vasoactive peptide.</text>
</comment>
<comment type="similarity">
    <text evidence="4">Belongs to the galanin family.</text>
</comment>
<accession>Q9UBC7</accession>
<accession>A1KXL3</accession>
<gene>
    <name type="primary">GALP</name>
</gene>
<protein>
    <recommendedName>
        <fullName>Galanin-like peptide</fullName>
    </recommendedName>
</protein>
<feature type="signal peptide" evidence="1">
    <location>
        <begin position="1"/>
        <end position="24"/>
    </location>
</feature>
<feature type="chain" id="PRO_0000010463" description="Galanin-like peptide">
    <location>
        <begin position="25"/>
        <end position="84"/>
    </location>
</feature>
<feature type="propeptide" id="PRO_0000010464" evidence="1">
    <location>
        <begin position="87"/>
        <end position="116"/>
    </location>
</feature>
<feature type="splice variant" id="VSP_030460" description="In isoform 2." evidence="3">
    <original>GRGGWTLNSAGYLLGPVLHLPQMGDQDGKRETALEILDLWKAIDGLPYSHPPQPSKRNVMETFAKPEIGDLGMLSMKIPKEEDVLK</original>
    <variation>SSTFPKWVTKTERGRQPLR</variation>
    <location>
        <begin position="30"/>
        <end position="115"/>
    </location>
</feature>
<feature type="sequence variant" id="VAR_020426" description="In dbSNP:rs3745833.">
    <original>I</original>
    <variation>M</variation>
    <location>
        <position position="72"/>
    </location>
</feature>
<sequence>MAPPSVPLVLLLVLLLSLAETPASAPAHRGRGGWTLNSAGYLLGPVLHLPQMGDQDGKRETALEILDLWKAIDGLPYSHPPQPSKRNVMETFAKPEIGDLGMLSMKIPKEEDVLKS</sequence>
<name>GALP_HUMAN</name>
<keyword id="KW-0025">Alternative splicing</keyword>
<keyword id="KW-0044">Antibiotic</keyword>
<keyword id="KW-0929">Antimicrobial</keyword>
<keyword id="KW-0165">Cleavage on pair of basic residues</keyword>
<keyword id="KW-0372">Hormone</keyword>
<keyword id="KW-0527">Neuropeptide</keyword>
<keyword id="KW-1185">Reference proteome</keyword>
<keyword id="KW-0964">Secreted</keyword>
<keyword id="KW-0732">Signal</keyword>
<proteinExistence type="evidence at protein level"/>
<reference key="1">
    <citation type="journal article" date="1999" name="J. Biol. Chem.">
        <title>Isolation and cDNA cloning of a novel galanin-like peptide (GALP) from porcine hypothalamus.</title>
        <authorList>
            <person name="Ohtaki T."/>
            <person name="Kumano S."/>
            <person name="Ishibashi Y."/>
            <person name="Ogi K."/>
            <person name="Matsui H."/>
            <person name="Harada M."/>
            <person name="Kitada C."/>
            <person name="Kurokawa T."/>
            <person name="Onda H."/>
            <person name="Fujino M."/>
        </authorList>
    </citation>
    <scope>NUCLEOTIDE SEQUENCE [MRNA] (ISOFORM 1)</scope>
</reference>
<reference key="2">
    <citation type="submission" date="2003-06" db="EMBL/GenBank/DDBJ databases">
        <title>Differential splicing leads to the novel peptide alarin another member of the galanin-like peptide family.</title>
        <authorList>
            <person name="Kofler B."/>
            <person name="Moritz K."/>
            <person name="Fenninger K."/>
        </authorList>
    </citation>
    <scope>NUCLEOTIDE SEQUENCE [MRNA] (ISOFORM 2)</scope>
</reference>
<reference key="3">
    <citation type="journal article" date="2006" name="J. Mol. Neurosci.">
        <title>Gangliocytes in neuroblastic tumors express alarin, a novel peptide derived by differential splicing of the galanin-like peptide gene.</title>
        <authorList>
            <person name="Santic R."/>
            <person name="Fenninger K."/>
            <person name="Graf K."/>
            <person name="Schneider R."/>
            <person name="Hauser-Kronberger C."/>
            <person name="Schilling F.H."/>
            <person name="Kogner P."/>
            <person name="Ratschek M."/>
            <person name="Jones N."/>
            <person name="Sperl W."/>
            <person name="Kofler B."/>
        </authorList>
    </citation>
    <scope>ALTERNATIVE SPLICING</scope>
    <source>
        <tissue>Neuroblastoma</tissue>
    </source>
</reference>
<reference key="4">
    <citation type="journal article" date="2007" name="Proc. Natl. Acad. Sci. U.S.A.">
        <title>Alarin is a vasoactive peptide.</title>
        <authorList>
            <person name="Santic R."/>
            <person name="Schmidhuber S.M."/>
            <person name="Lang R."/>
            <person name="Rauch I."/>
            <person name="Voglas E."/>
            <person name="Eberhard N."/>
            <person name="Bauer J.W."/>
            <person name="Brain S.D."/>
            <person name="Kofler B."/>
        </authorList>
    </citation>
    <scope>TISSUE SPECIFICITY (ISOFORM 2)</scope>
</reference>
<reference key="5">
    <citation type="journal article" date="2013" name="Biochem. Biophys. Res. Commun.">
        <title>Alarin but not its alternative-splicing form, GALP (Galanin-like peptide) has antimicrobial activity.</title>
        <authorList>
            <person name="Wada A."/>
            <person name="Wong P.F."/>
            <person name="Hojo H."/>
            <person name="Hasegawa M."/>
            <person name="Ichinose A."/>
            <person name="Llanes R."/>
            <person name="Kubo Y."/>
            <person name="Senba M."/>
            <person name="Ichinose Y."/>
        </authorList>
    </citation>
    <scope>FUNCTION (ISOFORM 2)</scope>
</reference>
<evidence type="ECO:0000250" key="1"/>
<evidence type="ECO:0000269" key="2">
    <source>
    </source>
</evidence>
<evidence type="ECO:0000303" key="3">
    <source ref="2"/>
</evidence>
<evidence type="ECO:0000305" key="4"/>
<dbReference type="EMBL" id="AF188492">
    <property type="protein sequence ID" value="AAF19724.1"/>
    <property type="molecule type" value="mRNA"/>
</dbReference>
<dbReference type="EMBL" id="AF188493">
    <property type="protein sequence ID" value="AAF19725.1"/>
    <property type="molecule type" value="mRNA"/>
</dbReference>
<dbReference type="EMBL" id="AY329637">
    <property type="protein sequence ID" value="AAQ99038.1"/>
    <property type="molecule type" value="mRNA"/>
</dbReference>
<dbReference type="CCDS" id="CCDS12940.1">
    <molecule id="Q9UBC7-1"/>
</dbReference>
<dbReference type="CCDS" id="CCDS46202.1">
    <molecule id="Q9UBC7-2"/>
</dbReference>
<dbReference type="RefSeq" id="NP_001139018.1">
    <molecule id="Q9UBC7-2"/>
    <property type="nucleotide sequence ID" value="NM_001145546.2"/>
</dbReference>
<dbReference type="RefSeq" id="NP_149097.1">
    <molecule id="Q9UBC7-1"/>
    <property type="nucleotide sequence ID" value="NM_033106.4"/>
</dbReference>
<dbReference type="BioGRID" id="124570">
    <property type="interactions" value="11"/>
</dbReference>
<dbReference type="FunCoup" id="Q9UBC7">
    <property type="interactions" value="366"/>
</dbReference>
<dbReference type="IntAct" id="Q9UBC7">
    <property type="interactions" value="5"/>
</dbReference>
<dbReference type="STRING" id="9606.ENSP00000349884"/>
<dbReference type="iPTMnet" id="Q9UBC7"/>
<dbReference type="PhosphoSitePlus" id="Q9UBC7"/>
<dbReference type="BioMuta" id="GALP"/>
<dbReference type="DMDM" id="20138432"/>
<dbReference type="PaxDb" id="9606-ENSP00000349884"/>
<dbReference type="PeptideAtlas" id="Q9UBC7"/>
<dbReference type="Antibodypedia" id="33185">
    <property type="antibodies" value="105 antibodies from 22 providers"/>
</dbReference>
<dbReference type="DNASU" id="85569"/>
<dbReference type="Ensembl" id="ENST00000357330.7">
    <molecule id="Q9UBC7-1"/>
    <property type="protein sequence ID" value="ENSP00000349884.2"/>
    <property type="gene ID" value="ENSG00000197487.9"/>
</dbReference>
<dbReference type="Ensembl" id="ENST00000440823.1">
    <molecule id="Q9UBC7-2"/>
    <property type="protein sequence ID" value="ENSP00000411521.1"/>
    <property type="gene ID" value="ENSG00000197487.9"/>
</dbReference>
<dbReference type="Ensembl" id="ENST00000590002.1">
    <molecule id="Q9UBC7-2"/>
    <property type="protein sequence ID" value="ENSP00000464698.1"/>
    <property type="gene ID" value="ENSG00000197487.9"/>
</dbReference>
<dbReference type="GeneID" id="85569"/>
<dbReference type="KEGG" id="hsa:85569"/>
<dbReference type="MANE-Select" id="ENST00000357330.7">
    <property type="protein sequence ID" value="ENSP00000349884.2"/>
    <property type="RefSeq nucleotide sequence ID" value="NM_033106.4"/>
    <property type="RefSeq protein sequence ID" value="NP_149097.1"/>
</dbReference>
<dbReference type="UCSC" id="uc002qmo.1">
    <molecule id="Q9UBC7-1"/>
    <property type="organism name" value="human"/>
</dbReference>
<dbReference type="AGR" id="HGNC:24840"/>
<dbReference type="CTD" id="85569"/>
<dbReference type="DisGeNET" id="85569"/>
<dbReference type="GeneCards" id="GALP"/>
<dbReference type="HGNC" id="HGNC:24840">
    <property type="gene designation" value="GALP"/>
</dbReference>
<dbReference type="HPA" id="ENSG00000197487">
    <property type="expression patterns" value="Not detected"/>
</dbReference>
<dbReference type="MIM" id="611178">
    <property type="type" value="gene"/>
</dbReference>
<dbReference type="neXtProt" id="NX_Q9UBC7"/>
<dbReference type="OpenTargets" id="ENSG00000197487"/>
<dbReference type="PharmGKB" id="PA162389277"/>
<dbReference type="VEuPathDB" id="HostDB:ENSG00000197487"/>
<dbReference type="eggNOG" id="ENOG502TI9H">
    <property type="taxonomic scope" value="Eukaryota"/>
</dbReference>
<dbReference type="GeneTree" id="ENSGT00390000016349"/>
<dbReference type="HOGENOM" id="CLU_167264_0_0_1"/>
<dbReference type="InParanoid" id="Q9UBC7"/>
<dbReference type="OMA" id="PQMSDQD"/>
<dbReference type="OrthoDB" id="8721537at2759"/>
<dbReference type="PAN-GO" id="Q9UBC7">
    <property type="GO annotations" value="3 GO annotations based on evolutionary models"/>
</dbReference>
<dbReference type="PhylomeDB" id="Q9UBC7"/>
<dbReference type="TreeFam" id="TF339481"/>
<dbReference type="PathwayCommons" id="Q9UBC7"/>
<dbReference type="SignaLink" id="Q9UBC7"/>
<dbReference type="SIGNOR" id="Q9UBC7"/>
<dbReference type="BioGRID-ORCS" id="85569">
    <property type="hits" value="315 hits in 1140 CRISPR screens"/>
</dbReference>
<dbReference type="GenomeRNAi" id="85569"/>
<dbReference type="Pharos" id="Q9UBC7">
    <property type="development level" value="Tbio"/>
</dbReference>
<dbReference type="PRO" id="PR:Q9UBC7"/>
<dbReference type="Proteomes" id="UP000005640">
    <property type="component" value="Chromosome 19"/>
</dbReference>
<dbReference type="RNAct" id="Q9UBC7">
    <property type="molecule type" value="protein"/>
</dbReference>
<dbReference type="Bgee" id="ENSG00000197487">
    <property type="expression patterns" value="Expressed in right lobe of liver and 46 other cell types or tissues"/>
</dbReference>
<dbReference type="GO" id="GO:0005576">
    <property type="term" value="C:extracellular region"/>
    <property type="evidence" value="ECO:0007669"/>
    <property type="project" value="UniProtKB-SubCell"/>
</dbReference>
<dbReference type="GO" id="GO:0005179">
    <property type="term" value="F:hormone activity"/>
    <property type="evidence" value="ECO:0007669"/>
    <property type="project" value="UniProtKB-KW"/>
</dbReference>
<dbReference type="GO" id="GO:0061844">
    <property type="term" value="P:antimicrobial humoral immune response mediated by antimicrobial peptide"/>
    <property type="evidence" value="ECO:0000315"/>
    <property type="project" value="UniProtKB"/>
</dbReference>
<dbReference type="GO" id="GO:0042595">
    <property type="term" value="P:behavioral response to starvation"/>
    <property type="evidence" value="ECO:0000318"/>
    <property type="project" value="GO_Central"/>
</dbReference>
<dbReference type="GO" id="GO:0042742">
    <property type="term" value="P:defense response to bacterium"/>
    <property type="evidence" value="ECO:0007669"/>
    <property type="project" value="UniProtKB-KW"/>
</dbReference>
<dbReference type="GO" id="GO:0050829">
    <property type="term" value="P:defense response to Gram-negative bacterium"/>
    <property type="evidence" value="ECO:0000315"/>
    <property type="project" value="UniProtKB"/>
</dbReference>
<dbReference type="GO" id="GO:0035821">
    <property type="term" value="P:modulation of process of another organism"/>
    <property type="evidence" value="ECO:0000315"/>
    <property type="project" value="UniProtKB"/>
</dbReference>
<dbReference type="GO" id="GO:0007218">
    <property type="term" value="P:neuropeptide signaling pathway"/>
    <property type="evidence" value="ECO:0007669"/>
    <property type="project" value="UniProtKB-KW"/>
</dbReference>
<dbReference type="GO" id="GO:0032098">
    <property type="term" value="P:regulation of appetite"/>
    <property type="evidence" value="ECO:0007669"/>
    <property type="project" value="Ensembl"/>
</dbReference>
<dbReference type="GO" id="GO:0032868">
    <property type="term" value="P:response to insulin"/>
    <property type="evidence" value="ECO:0007669"/>
    <property type="project" value="Ensembl"/>
</dbReference>
<dbReference type="InterPro" id="IPR008174">
    <property type="entry name" value="Galanin"/>
</dbReference>
<dbReference type="InterPro" id="IPR039244">
    <property type="entry name" value="GALP"/>
</dbReference>
<dbReference type="PANTHER" id="PTHR20950:SF1">
    <property type="entry name" value="GALANIN-LIKE PEPTIDE"/>
    <property type="match status" value="1"/>
</dbReference>
<dbReference type="PANTHER" id="PTHR20950">
    <property type="entry name" value="GALANIN-RELATED PEPTIDE"/>
    <property type="match status" value="1"/>
</dbReference>
<dbReference type="Pfam" id="PF01296">
    <property type="entry name" value="Galanin"/>
    <property type="match status" value="1"/>
</dbReference>
<dbReference type="PROSITE" id="PS00861">
    <property type="entry name" value="GALANIN"/>
    <property type="match status" value="1"/>
</dbReference>